<organism>
    <name type="scientific">Clostridium botulinum (strain Okra / Type B1)</name>
    <dbReference type="NCBI Taxonomy" id="498213"/>
    <lineage>
        <taxon>Bacteria</taxon>
        <taxon>Bacillati</taxon>
        <taxon>Bacillota</taxon>
        <taxon>Clostridia</taxon>
        <taxon>Eubacteriales</taxon>
        <taxon>Clostridiaceae</taxon>
        <taxon>Clostridium</taxon>
    </lineage>
</organism>
<reference key="1">
    <citation type="journal article" date="2007" name="PLoS ONE">
        <title>Analysis of the neurotoxin complex genes in Clostridium botulinum A1-A4 and B1 strains: BoNT/A3, /Ba4 and /B1 clusters are located within plasmids.</title>
        <authorList>
            <person name="Smith T.J."/>
            <person name="Hill K.K."/>
            <person name="Foley B.T."/>
            <person name="Detter J.C."/>
            <person name="Munk A.C."/>
            <person name="Bruce D.C."/>
            <person name="Doggett N.A."/>
            <person name="Smith L.A."/>
            <person name="Marks J.D."/>
            <person name="Xie G."/>
            <person name="Brettin T.S."/>
        </authorList>
    </citation>
    <scope>NUCLEOTIDE SEQUENCE [LARGE SCALE GENOMIC DNA]</scope>
    <source>
        <strain>Okra / Type B1</strain>
    </source>
</reference>
<name>SELA_CLOBK</name>
<gene>
    <name evidence="1" type="primary">selA</name>
    <name type="ordered locus">CLD_1568</name>
</gene>
<evidence type="ECO:0000255" key="1">
    <source>
        <dbReference type="HAMAP-Rule" id="MF_00423"/>
    </source>
</evidence>
<proteinExistence type="inferred from homology"/>
<sequence length="462" mass="52306">MDKKQLLRNLPKIDELLKEEIVNRYLQENSRTLVVDSLRQSIDHYRGEILKNNIDSFTKENVVNYFIDTLEENKSTKFKKVINATGVVIHTNLGRSLLAKEAIENVIKVSENYSNLEYDLKDGKRGSRYSHVEELIKKVTGAEAAMVVNNNAAAVMLALNTLCEGREAIVSRGQLVEIGGSFRIPDVMKFSRAHLVEVGTTNRTHLYDYENNINENTGVLLKVHTSNFKIMGFTEEVSSEEMVQLGGKYKLPVMEDIGSGTLVDFSKYGFTYEPTVQSSLEKGVDVVTFSGDKMLGGPQAGIIVGKKKYIDKMKKNQLTRALRIDKMTLAALEGTLKCYIDEKEAIENIPTLNMILSSKDIHKKRAQRLKRRLQNNVKDFNFKVSEDLSMVGGGSMPGERIPTYVVKVNSDKITAEKIEEKLRLSKNPIIVRVSKDEVILDVRTLFERDFNIIVEEFKKLLK</sequence>
<comment type="function">
    <text evidence="1">Converts seryl-tRNA(Sec) to selenocysteinyl-tRNA(Sec) required for selenoprotein biosynthesis.</text>
</comment>
<comment type="catalytic activity">
    <reaction evidence="1">
        <text>L-seryl-tRNA(Sec) + selenophosphate + H(+) = L-selenocysteinyl-tRNA(Sec) + phosphate</text>
        <dbReference type="Rhea" id="RHEA:22728"/>
        <dbReference type="Rhea" id="RHEA-COMP:9742"/>
        <dbReference type="Rhea" id="RHEA-COMP:9743"/>
        <dbReference type="ChEBI" id="CHEBI:15378"/>
        <dbReference type="ChEBI" id="CHEBI:16144"/>
        <dbReference type="ChEBI" id="CHEBI:43474"/>
        <dbReference type="ChEBI" id="CHEBI:78533"/>
        <dbReference type="ChEBI" id="CHEBI:78573"/>
        <dbReference type="EC" id="2.9.1.1"/>
    </reaction>
</comment>
<comment type="cofactor">
    <cofactor evidence="1">
        <name>pyridoxal 5'-phosphate</name>
        <dbReference type="ChEBI" id="CHEBI:597326"/>
    </cofactor>
</comment>
<comment type="pathway">
    <text evidence="1">Aminoacyl-tRNA biosynthesis; selenocysteinyl-tRNA(Sec) biosynthesis; selenocysteinyl-tRNA(Sec) from L-seryl-tRNA(Sec) (bacterial route): step 1/1.</text>
</comment>
<comment type="subcellular location">
    <subcellularLocation>
        <location evidence="1">Cytoplasm</location>
    </subcellularLocation>
</comment>
<comment type="similarity">
    <text evidence="1">Belongs to the SelA family.</text>
</comment>
<keyword id="KW-0963">Cytoplasm</keyword>
<keyword id="KW-0648">Protein biosynthesis</keyword>
<keyword id="KW-0663">Pyridoxal phosphate</keyword>
<keyword id="KW-0711">Selenium</keyword>
<keyword id="KW-0808">Transferase</keyword>
<protein>
    <recommendedName>
        <fullName evidence="1">L-seryl-tRNA(Sec) selenium transferase</fullName>
        <ecNumber evidence="1">2.9.1.1</ecNumber>
    </recommendedName>
    <alternativeName>
        <fullName evidence="1">Selenocysteine synthase</fullName>
        <shortName evidence="1">Sec synthase</shortName>
    </alternativeName>
    <alternativeName>
        <fullName evidence="1">Selenocysteinyl-tRNA(Sec) synthase</fullName>
    </alternativeName>
</protein>
<feature type="chain" id="PRO_1000124134" description="L-seryl-tRNA(Sec) selenium transferase">
    <location>
        <begin position="1"/>
        <end position="462"/>
    </location>
</feature>
<feature type="modified residue" description="N6-(pyridoxal phosphate)lysine" evidence="1">
    <location>
        <position position="293"/>
    </location>
</feature>
<dbReference type="EC" id="2.9.1.1" evidence="1"/>
<dbReference type="EMBL" id="CP000939">
    <property type="protein sequence ID" value="ACA46479.1"/>
    <property type="molecule type" value="Genomic_DNA"/>
</dbReference>
<dbReference type="RefSeq" id="WP_003400886.1">
    <property type="nucleotide sequence ID" value="NC_010516.1"/>
</dbReference>
<dbReference type="SMR" id="B1ILX5"/>
<dbReference type="KEGG" id="cbb:CLD_1568"/>
<dbReference type="HOGENOM" id="CLU_038142_1_0_9"/>
<dbReference type="UniPathway" id="UPA00906">
    <property type="reaction ID" value="UER00896"/>
</dbReference>
<dbReference type="Proteomes" id="UP000008541">
    <property type="component" value="Chromosome"/>
</dbReference>
<dbReference type="GO" id="GO:0005737">
    <property type="term" value="C:cytoplasm"/>
    <property type="evidence" value="ECO:0007669"/>
    <property type="project" value="UniProtKB-SubCell"/>
</dbReference>
<dbReference type="GO" id="GO:0004125">
    <property type="term" value="F:L-seryl-tRNA(Sec) selenium transferase activity"/>
    <property type="evidence" value="ECO:0007669"/>
    <property type="project" value="UniProtKB-UniRule"/>
</dbReference>
<dbReference type="GO" id="GO:0001717">
    <property type="term" value="P:conversion of seryl-tRNAsec to selenocys-tRNAsec"/>
    <property type="evidence" value="ECO:0007669"/>
    <property type="project" value="UniProtKB-UniRule"/>
</dbReference>
<dbReference type="GO" id="GO:0001514">
    <property type="term" value="P:selenocysteine incorporation"/>
    <property type="evidence" value="ECO:0007669"/>
    <property type="project" value="UniProtKB-UniRule"/>
</dbReference>
<dbReference type="FunFam" id="3.40.640.10:FF:000028">
    <property type="entry name" value="L-seryl-tRNA(Sec) selenium transferase"/>
    <property type="match status" value="1"/>
</dbReference>
<dbReference type="Gene3D" id="3.90.1150.180">
    <property type="match status" value="1"/>
</dbReference>
<dbReference type="Gene3D" id="3.40.640.10">
    <property type="entry name" value="Type I PLP-dependent aspartate aminotransferase-like (Major domain)"/>
    <property type="match status" value="1"/>
</dbReference>
<dbReference type="HAMAP" id="MF_00423">
    <property type="entry name" value="SelA"/>
    <property type="match status" value="1"/>
</dbReference>
<dbReference type="InterPro" id="IPR015424">
    <property type="entry name" value="PyrdxlP-dep_Trfase"/>
</dbReference>
<dbReference type="InterPro" id="IPR015421">
    <property type="entry name" value="PyrdxlP-dep_Trfase_major"/>
</dbReference>
<dbReference type="InterPro" id="IPR018319">
    <property type="entry name" value="SelA-like"/>
</dbReference>
<dbReference type="InterPro" id="IPR004534">
    <property type="entry name" value="SelA_trans"/>
</dbReference>
<dbReference type="InterPro" id="IPR025862">
    <property type="entry name" value="SelA_trans_N_dom"/>
</dbReference>
<dbReference type="NCBIfam" id="TIGR00474">
    <property type="entry name" value="selA"/>
    <property type="match status" value="1"/>
</dbReference>
<dbReference type="PANTHER" id="PTHR32328">
    <property type="entry name" value="L-SERYL-TRNA(SEC) SELENIUM TRANSFERASE"/>
    <property type="match status" value="1"/>
</dbReference>
<dbReference type="PANTHER" id="PTHR32328:SF0">
    <property type="entry name" value="L-SERYL-TRNA(SEC) SELENIUM TRANSFERASE"/>
    <property type="match status" value="1"/>
</dbReference>
<dbReference type="Pfam" id="PF12390">
    <property type="entry name" value="Se-cys_synth_N"/>
    <property type="match status" value="1"/>
</dbReference>
<dbReference type="Pfam" id="PF03841">
    <property type="entry name" value="SelA"/>
    <property type="match status" value="1"/>
</dbReference>
<dbReference type="SUPFAM" id="SSF53383">
    <property type="entry name" value="PLP-dependent transferases"/>
    <property type="match status" value="1"/>
</dbReference>
<accession>B1ILX5</accession>